<sequence length="394" mass="44113">MNKYKRIFLVVMDSVGIGEAPDAEQFGDLGSDTIGHIAEHMNGLHMPNMVKLGLGNIREMKGISKVEKPLGYYTKMQEKSTGKDTMTGHWEIMGLYIDTPFQVFPEGFPKELLDELEEKTGRKIIGNKPASGTEILDELGQEQMETGSLIVYTSADSVLQIAAHEEVVPLDELYKICKIARELTLDEKYMVGRVIARPFVGEPGNFTRTPNRHDYALKPFGRTVMNELKDSDYDVIAIGKISDIYDGEGVTESLRTKSNMDGMDKLVDTLNMDFTGLSFLNLVDFDALFGHRRDPQGYGEALQEYDARLPEVFEKLKEDDLLLITADHGNDPVHHGTDHTREYVPLLAYSPSMKEGGQELPLRQTFADIGATVAENFGVKMPEYGTSFLNELKK</sequence>
<keyword id="KW-0963">Cytoplasm</keyword>
<keyword id="KW-0413">Isomerase</keyword>
<keyword id="KW-0464">Manganese</keyword>
<keyword id="KW-0479">Metal-binding</keyword>
<comment type="function">
    <text evidence="1">Isomerase that catalyzes the conversion of deoxy-ribose 1-phosphate (dRib-1-P) and ribose 1-phosphate (Rib-1-P) to deoxy-ribose 5-phosphate (dRib-5-P) and ribose 5-phosphate (Rib-5-P), respectively.</text>
</comment>
<comment type="catalytic activity">
    <reaction evidence="1">
        <text>2-deoxy-alpha-D-ribose 1-phosphate = 2-deoxy-D-ribose 5-phosphate</text>
        <dbReference type="Rhea" id="RHEA:27658"/>
        <dbReference type="ChEBI" id="CHEBI:57259"/>
        <dbReference type="ChEBI" id="CHEBI:62877"/>
        <dbReference type="EC" id="5.4.2.7"/>
    </reaction>
</comment>
<comment type="catalytic activity">
    <reaction evidence="1">
        <text>alpha-D-ribose 1-phosphate = D-ribose 5-phosphate</text>
        <dbReference type="Rhea" id="RHEA:18793"/>
        <dbReference type="ChEBI" id="CHEBI:57720"/>
        <dbReference type="ChEBI" id="CHEBI:78346"/>
        <dbReference type="EC" id="5.4.2.7"/>
    </reaction>
</comment>
<comment type="cofactor">
    <cofactor evidence="1">
        <name>Mn(2+)</name>
        <dbReference type="ChEBI" id="CHEBI:29035"/>
    </cofactor>
    <text evidence="1">Binds 2 manganese ions.</text>
</comment>
<comment type="pathway">
    <text evidence="1">Carbohydrate degradation; 2-deoxy-D-ribose 1-phosphate degradation; D-glyceraldehyde 3-phosphate and acetaldehyde from 2-deoxy-alpha-D-ribose 1-phosphate: step 1/2.</text>
</comment>
<comment type="subcellular location">
    <subcellularLocation>
        <location evidence="1">Cytoplasm</location>
    </subcellularLocation>
</comment>
<comment type="similarity">
    <text evidence="1">Belongs to the phosphopentomutase family.</text>
</comment>
<dbReference type="EC" id="5.4.2.7" evidence="1"/>
<dbReference type="EMBL" id="CP001283">
    <property type="protein sequence ID" value="ACK92162.1"/>
    <property type="molecule type" value="Genomic_DNA"/>
</dbReference>
<dbReference type="RefSeq" id="WP_001046067.1">
    <property type="nucleotide sequence ID" value="NC_011773.1"/>
</dbReference>
<dbReference type="SMR" id="B7JLU2"/>
<dbReference type="KEGG" id="bcu:BCAH820_4111"/>
<dbReference type="HOGENOM" id="CLU_053861_0_0_9"/>
<dbReference type="UniPathway" id="UPA00002">
    <property type="reaction ID" value="UER00467"/>
</dbReference>
<dbReference type="Proteomes" id="UP000001363">
    <property type="component" value="Chromosome"/>
</dbReference>
<dbReference type="GO" id="GO:0005829">
    <property type="term" value="C:cytosol"/>
    <property type="evidence" value="ECO:0007669"/>
    <property type="project" value="TreeGrafter"/>
</dbReference>
<dbReference type="GO" id="GO:0000287">
    <property type="term" value="F:magnesium ion binding"/>
    <property type="evidence" value="ECO:0007669"/>
    <property type="project" value="InterPro"/>
</dbReference>
<dbReference type="GO" id="GO:0030145">
    <property type="term" value="F:manganese ion binding"/>
    <property type="evidence" value="ECO:0007669"/>
    <property type="project" value="UniProtKB-UniRule"/>
</dbReference>
<dbReference type="GO" id="GO:0008973">
    <property type="term" value="F:phosphopentomutase activity"/>
    <property type="evidence" value="ECO:0007669"/>
    <property type="project" value="UniProtKB-UniRule"/>
</dbReference>
<dbReference type="GO" id="GO:0006018">
    <property type="term" value="P:2-deoxyribose 1-phosphate catabolic process"/>
    <property type="evidence" value="ECO:0007669"/>
    <property type="project" value="UniProtKB-UniRule"/>
</dbReference>
<dbReference type="GO" id="GO:0006015">
    <property type="term" value="P:5-phosphoribose 1-diphosphate biosynthetic process"/>
    <property type="evidence" value="ECO:0007669"/>
    <property type="project" value="UniProtKB-UniPathway"/>
</dbReference>
<dbReference type="GO" id="GO:0043094">
    <property type="term" value="P:metabolic compound salvage"/>
    <property type="evidence" value="ECO:0007669"/>
    <property type="project" value="InterPro"/>
</dbReference>
<dbReference type="GO" id="GO:0009117">
    <property type="term" value="P:nucleotide metabolic process"/>
    <property type="evidence" value="ECO:0007669"/>
    <property type="project" value="InterPro"/>
</dbReference>
<dbReference type="CDD" id="cd16009">
    <property type="entry name" value="PPM"/>
    <property type="match status" value="1"/>
</dbReference>
<dbReference type="FunFam" id="3.30.70.1250:FF:000001">
    <property type="entry name" value="Phosphopentomutase"/>
    <property type="match status" value="1"/>
</dbReference>
<dbReference type="Gene3D" id="3.40.720.10">
    <property type="entry name" value="Alkaline Phosphatase, subunit A"/>
    <property type="match status" value="1"/>
</dbReference>
<dbReference type="Gene3D" id="3.30.70.1250">
    <property type="entry name" value="Phosphopentomutase"/>
    <property type="match status" value="1"/>
</dbReference>
<dbReference type="HAMAP" id="MF_00740">
    <property type="entry name" value="Phosphopentomut"/>
    <property type="match status" value="1"/>
</dbReference>
<dbReference type="InterPro" id="IPR017850">
    <property type="entry name" value="Alkaline_phosphatase_core_sf"/>
</dbReference>
<dbReference type="InterPro" id="IPR010045">
    <property type="entry name" value="DeoB"/>
</dbReference>
<dbReference type="InterPro" id="IPR006124">
    <property type="entry name" value="Metalloenzyme"/>
</dbReference>
<dbReference type="InterPro" id="IPR024052">
    <property type="entry name" value="Phosphopentomutase_DeoB_cap_sf"/>
</dbReference>
<dbReference type="NCBIfam" id="TIGR01696">
    <property type="entry name" value="deoB"/>
    <property type="match status" value="1"/>
</dbReference>
<dbReference type="NCBIfam" id="NF003766">
    <property type="entry name" value="PRK05362.1"/>
    <property type="match status" value="1"/>
</dbReference>
<dbReference type="PANTHER" id="PTHR21110">
    <property type="entry name" value="PHOSPHOPENTOMUTASE"/>
    <property type="match status" value="1"/>
</dbReference>
<dbReference type="PANTHER" id="PTHR21110:SF0">
    <property type="entry name" value="PHOSPHOPENTOMUTASE"/>
    <property type="match status" value="1"/>
</dbReference>
<dbReference type="Pfam" id="PF01676">
    <property type="entry name" value="Metalloenzyme"/>
    <property type="match status" value="1"/>
</dbReference>
<dbReference type="PIRSF" id="PIRSF001491">
    <property type="entry name" value="Ppentomutase"/>
    <property type="match status" value="1"/>
</dbReference>
<dbReference type="SUPFAM" id="SSF53649">
    <property type="entry name" value="Alkaline phosphatase-like"/>
    <property type="match status" value="1"/>
</dbReference>
<dbReference type="SUPFAM" id="SSF143856">
    <property type="entry name" value="DeoB insert domain-like"/>
    <property type="match status" value="1"/>
</dbReference>
<accession>B7JLU2</accession>
<feature type="chain" id="PRO_1000133059" description="Phosphopentomutase">
    <location>
        <begin position="1"/>
        <end position="394"/>
    </location>
</feature>
<feature type="binding site" evidence="1">
    <location>
        <position position="13"/>
    </location>
    <ligand>
        <name>Mn(2+)</name>
        <dbReference type="ChEBI" id="CHEBI:29035"/>
        <label>1</label>
    </ligand>
</feature>
<feature type="binding site" evidence="1">
    <location>
        <position position="286"/>
    </location>
    <ligand>
        <name>Mn(2+)</name>
        <dbReference type="ChEBI" id="CHEBI:29035"/>
        <label>2</label>
    </ligand>
</feature>
<feature type="binding site" evidence="1">
    <location>
        <position position="291"/>
    </location>
    <ligand>
        <name>Mn(2+)</name>
        <dbReference type="ChEBI" id="CHEBI:29035"/>
        <label>2</label>
    </ligand>
</feature>
<feature type="binding site" evidence="1">
    <location>
        <position position="327"/>
    </location>
    <ligand>
        <name>Mn(2+)</name>
        <dbReference type="ChEBI" id="CHEBI:29035"/>
        <label>1</label>
    </ligand>
</feature>
<feature type="binding site" evidence="1">
    <location>
        <position position="328"/>
    </location>
    <ligand>
        <name>Mn(2+)</name>
        <dbReference type="ChEBI" id="CHEBI:29035"/>
        <label>1</label>
    </ligand>
</feature>
<feature type="binding site" evidence="1">
    <location>
        <position position="339"/>
    </location>
    <ligand>
        <name>Mn(2+)</name>
        <dbReference type="ChEBI" id="CHEBI:29035"/>
        <label>2</label>
    </ligand>
</feature>
<gene>
    <name evidence="1" type="primary">deoB</name>
    <name type="ordered locus">BCAH820_4111</name>
</gene>
<proteinExistence type="inferred from homology"/>
<reference key="1">
    <citation type="submission" date="2008-10" db="EMBL/GenBank/DDBJ databases">
        <title>Genome sequence of Bacillus cereus AH820.</title>
        <authorList>
            <person name="Dodson R.J."/>
            <person name="Durkin A.S."/>
            <person name="Rosovitz M.J."/>
            <person name="Rasko D.A."/>
            <person name="Hoffmaster A."/>
            <person name="Ravel J."/>
            <person name="Sutton G."/>
        </authorList>
    </citation>
    <scope>NUCLEOTIDE SEQUENCE [LARGE SCALE GENOMIC DNA]</scope>
    <source>
        <strain>AH820</strain>
    </source>
</reference>
<name>DEOB_BACC0</name>
<organism>
    <name type="scientific">Bacillus cereus (strain AH820)</name>
    <dbReference type="NCBI Taxonomy" id="405535"/>
    <lineage>
        <taxon>Bacteria</taxon>
        <taxon>Bacillati</taxon>
        <taxon>Bacillota</taxon>
        <taxon>Bacilli</taxon>
        <taxon>Bacillales</taxon>
        <taxon>Bacillaceae</taxon>
        <taxon>Bacillus</taxon>
        <taxon>Bacillus cereus group</taxon>
    </lineage>
</organism>
<evidence type="ECO:0000255" key="1">
    <source>
        <dbReference type="HAMAP-Rule" id="MF_00740"/>
    </source>
</evidence>
<protein>
    <recommendedName>
        <fullName evidence="1">Phosphopentomutase</fullName>
        <ecNumber evidence="1">5.4.2.7</ecNumber>
    </recommendedName>
    <alternativeName>
        <fullName evidence="1">Phosphodeoxyribomutase</fullName>
    </alternativeName>
</protein>